<organism>
    <name type="scientific">Bordetella parapertussis (strain 12822 / ATCC BAA-587 / NCTC 13253)</name>
    <dbReference type="NCBI Taxonomy" id="257311"/>
    <lineage>
        <taxon>Bacteria</taxon>
        <taxon>Pseudomonadati</taxon>
        <taxon>Pseudomonadota</taxon>
        <taxon>Betaproteobacteria</taxon>
        <taxon>Burkholderiales</taxon>
        <taxon>Alcaligenaceae</taxon>
        <taxon>Bordetella</taxon>
    </lineage>
</organism>
<feature type="chain" id="PRO_0000215239" description="Ectoine dioxygenase">
    <location>
        <begin position="1"/>
        <end position="308"/>
    </location>
</feature>
<feature type="binding site" evidence="1">
    <location>
        <position position="131"/>
    </location>
    <ligand>
        <name>L-ectoine</name>
        <dbReference type="ChEBI" id="CHEBI:58515"/>
    </ligand>
</feature>
<feature type="binding site" evidence="1">
    <location>
        <position position="137"/>
    </location>
    <ligand>
        <name>2-oxoglutarate</name>
        <dbReference type="ChEBI" id="CHEBI:16810"/>
    </ligand>
</feature>
<feature type="binding site" evidence="2">
    <location>
        <position position="148"/>
    </location>
    <ligand>
        <name>Fe cation</name>
        <dbReference type="ChEBI" id="CHEBI:24875"/>
    </ligand>
</feature>
<feature type="binding site" evidence="2">
    <location>
        <position position="150"/>
    </location>
    <ligand>
        <name>Fe cation</name>
        <dbReference type="ChEBI" id="CHEBI:24875"/>
    </ligand>
</feature>
<feature type="binding site" evidence="2">
    <location>
        <position position="249"/>
    </location>
    <ligand>
        <name>Fe cation</name>
        <dbReference type="ChEBI" id="CHEBI:24875"/>
    </ligand>
</feature>
<feature type="site" description="Important for ectoine stabilization" evidence="1">
    <location>
        <position position="154"/>
    </location>
</feature>
<sequence>MISPAQDPYASRTDRSSAIIARQDPVVYGEGKFADALSADQVQSYERDGFLLLENLFSDEEVAALLAEVERMTRDPAIVRREEAITEPGSNAVRSIFMVHVLSPILGRLVRDPRLANAARQILGAEVYVHQSRANMKPGFKGKEFYWHSDFETWHVEDGMPSMRALSCSVLLTDNNEANGPLMLVPGSHRQFISCVGETPRDHYKQSLKKQEYGVPDPVSLQLLAEQGGISTMTGKAGSVVFFDCNTMHGSNSNISPWPRANVFMVYNSMENTLNPPKYGLNPRPEHIATRQAFKAVRPLDSLKLVER</sequence>
<evidence type="ECO:0000250" key="1">
    <source>
        <dbReference type="UniProtKB" id="Q1GNW5"/>
    </source>
</evidence>
<evidence type="ECO:0000250" key="2">
    <source>
        <dbReference type="UniProtKB" id="Q2TDY4"/>
    </source>
</evidence>
<gene>
    <name evidence="2" type="primary">ectD</name>
    <name type="ordered locus">BPP1891</name>
</gene>
<reference key="1">
    <citation type="journal article" date="2003" name="Nat. Genet.">
        <title>Comparative analysis of the genome sequences of Bordetella pertussis, Bordetella parapertussis and Bordetella bronchiseptica.</title>
        <authorList>
            <person name="Parkhill J."/>
            <person name="Sebaihia M."/>
            <person name="Preston A."/>
            <person name="Murphy L.D."/>
            <person name="Thomson N.R."/>
            <person name="Harris D.E."/>
            <person name="Holden M.T.G."/>
            <person name="Churcher C.M."/>
            <person name="Bentley S.D."/>
            <person name="Mungall K.L."/>
            <person name="Cerdeno-Tarraga A.-M."/>
            <person name="Temple L."/>
            <person name="James K.D."/>
            <person name="Harris B."/>
            <person name="Quail M.A."/>
            <person name="Achtman M."/>
            <person name="Atkin R."/>
            <person name="Baker S."/>
            <person name="Basham D."/>
            <person name="Bason N."/>
            <person name="Cherevach I."/>
            <person name="Chillingworth T."/>
            <person name="Collins M."/>
            <person name="Cronin A."/>
            <person name="Davis P."/>
            <person name="Doggett J."/>
            <person name="Feltwell T."/>
            <person name="Goble A."/>
            <person name="Hamlin N."/>
            <person name="Hauser H."/>
            <person name="Holroyd S."/>
            <person name="Jagels K."/>
            <person name="Leather S."/>
            <person name="Moule S."/>
            <person name="Norberczak H."/>
            <person name="O'Neil S."/>
            <person name="Ormond D."/>
            <person name="Price C."/>
            <person name="Rabbinowitsch E."/>
            <person name="Rutter S."/>
            <person name="Sanders M."/>
            <person name="Saunders D."/>
            <person name="Seeger K."/>
            <person name="Sharp S."/>
            <person name="Simmonds M."/>
            <person name="Skelton J."/>
            <person name="Squares R."/>
            <person name="Squares S."/>
            <person name="Stevens K."/>
            <person name="Unwin L."/>
            <person name="Whitehead S."/>
            <person name="Barrell B.G."/>
            <person name="Maskell D.J."/>
        </authorList>
    </citation>
    <scope>NUCLEOTIDE SEQUENCE [LARGE SCALE GENOMIC DNA]</scope>
    <source>
        <strain>12822 / ATCC BAA-587 / NCTC 13253</strain>
    </source>
</reference>
<keyword id="KW-0223">Dioxygenase</keyword>
<keyword id="KW-0408">Iron</keyword>
<keyword id="KW-0479">Metal-binding</keyword>
<keyword id="KW-0560">Oxidoreductase</keyword>
<dbReference type="EC" id="1.14.11.55" evidence="2"/>
<dbReference type="EMBL" id="BX640428">
    <property type="protein sequence ID" value="CAE37192.1"/>
    <property type="molecule type" value="Genomic_DNA"/>
</dbReference>
<dbReference type="RefSeq" id="WP_010928264.1">
    <property type="nucleotide sequence ID" value="NC_002928.3"/>
</dbReference>
<dbReference type="SMR" id="Q7W977"/>
<dbReference type="GeneID" id="93203660"/>
<dbReference type="KEGG" id="bpa:BPP1891"/>
<dbReference type="HOGENOM" id="CLU_048953_5_0_4"/>
<dbReference type="Proteomes" id="UP000001421">
    <property type="component" value="Chromosome"/>
</dbReference>
<dbReference type="GO" id="GO:0016706">
    <property type="term" value="F:2-oxoglutarate-dependent dioxygenase activity"/>
    <property type="evidence" value="ECO:0000250"/>
    <property type="project" value="UniProtKB"/>
</dbReference>
<dbReference type="GO" id="GO:0005506">
    <property type="term" value="F:iron ion binding"/>
    <property type="evidence" value="ECO:0000250"/>
    <property type="project" value="UniProtKB"/>
</dbReference>
<dbReference type="GO" id="GO:0042400">
    <property type="term" value="P:ectoine catabolic process"/>
    <property type="evidence" value="ECO:0000250"/>
    <property type="project" value="UniProtKB"/>
</dbReference>
<dbReference type="FunFam" id="2.60.120.620:FF:000016">
    <property type="entry name" value="Ectoine hydroxylase"/>
    <property type="match status" value="1"/>
</dbReference>
<dbReference type="Gene3D" id="2.60.120.620">
    <property type="entry name" value="q2cbj1_9rhob like domain"/>
    <property type="match status" value="1"/>
</dbReference>
<dbReference type="InterPro" id="IPR012774">
    <property type="entry name" value="EctD"/>
</dbReference>
<dbReference type="InterPro" id="IPR008775">
    <property type="entry name" value="Phytyl_CoA_dOase-like"/>
</dbReference>
<dbReference type="NCBIfam" id="TIGR02408">
    <property type="entry name" value="ectoine_ThpD"/>
    <property type="match status" value="1"/>
</dbReference>
<dbReference type="PANTHER" id="PTHR20883:SF48">
    <property type="entry name" value="ECTOINE DIOXYGENASE"/>
    <property type="match status" value="1"/>
</dbReference>
<dbReference type="PANTHER" id="PTHR20883">
    <property type="entry name" value="PHYTANOYL-COA DIOXYGENASE DOMAIN CONTAINING 1"/>
    <property type="match status" value="1"/>
</dbReference>
<dbReference type="Pfam" id="PF05721">
    <property type="entry name" value="PhyH"/>
    <property type="match status" value="1"/>
</dbReference>
<dbReference type="SUPFAM" id="SSF51197">
    <property type="entry name" value="Clavaminate synthase-like"/>
    <property type="match status" value="1"/>
</dbReference>
<proteinExistence type="inferred from homology"/>
<comment type="function">
    <text evidence="2">Involved in the biosynthesis of 5-hydroxyectoine, called compatible solute, which helps organisms to survive extreme osmotic stress by acting as a highly soluble organic osmolyte. Catalyzes the 2-oxoglutarate-dependent selective hydroxylation of L-ectoine to yield (4S,5S)-5-hydroxyectoine.</text>
</comment>
<comment type="catalytic activity">
    <reaction evidence="2">
        <text>L-ectoine + 2-oxoglutarate + O2 = 5-hydroxyectoine + succinate + CO2</text>
        <dbReference type="Rhea" id="RHEA:45740"/>
        <dbReference type="ChEBI" id="CHEBI:15379"/>
        <dbReference type="ChEBI" id="CHEBI:16526"/>
        <dbReference type="ChEBI" id="CHEBI:16810"/>
        <dbReference type="ChEBI" id="CHEBI:30031"/>
        <dbReference type="ChEBI" id="CHEBI:58515"/>
        <dbReference type="ChEBI" id="CHEBI:85413"/>
        <dbReference type="EC" id="1.14.11.55"/>
    </reaction>
</comment>
<comment type="cofactor">
    <cofactor evidence="2">
        <name>Fe(2+)</name>
        <dbReference type="ChEBI" id="CHEBI:29033"/>
    </cofactor>
    <text evidence="2">Binds 1 Fe(2+) ion.</text>
</comment>
<comment type="subunit">
    <text evidence="2">Homodimer.</text>
</comment>
<comment type="similarity">
    <text evidence="2">Belongs to the PhyH family. EctD subfamily.</text>
</comment>
<accession>Q7W977</accession>
<name>ECTD_BORPA</name>
<protein>
    <recommendedName>
        <fullName evidence="2">Ectoine dioxygenase</fullName>
        <ecNumber evidence="2">1.14.11.55</ecNumber>
    </recommendedName>
    <alternativeName>
        <fullName evidence="2">Ectoine hydroxylase</fullName>
    </alternativeName>
</protein>